<evidence type="ECO:0000255" key="1">
    <source>
        <dbReference type="HAMAP-Rule" id="MF_00703"/>
    </source>
</evidence>
<evidence type="ECO:0000305" key="2"/>
<gene>
    <name type="ordered locus">RPA4147</name>
</gene>
<dbReference type="EC" id="2.4.2.4" evidence="1"/>
<dbReference type="EMBL" id="BX572606">
    <property type="protein sequence ID" value="CAE29588.1"/>
    <property type="status" value="ALT_INIT"/>
    <property type="molecule type" value="Genomic_DNA"/>
</dbReference>
<dbReference type="RefSeq" id="WP_042441276.1">
    <property type="nucleotide sequence ID" value="NZ_CP116810.1"/>
</dbReference>
<dbReference type="SMR" id="Q6N2A3"/>
<dbReference type="STRING" id="258594.RPA4147"/>
<dbReference type="GeneID" id="66895270"/>
<dbReference type="eggNOG" id="COG0213">
    <property type="taxonomic scope" value="Bacteria"/>
</dbReference>
<dbReference type="HOGENOM" id="CLU_025040_6_0_5"/>
<dbReference type="GO" id="GO:0005829">
    <property type="term" value="C:cytosol"/>
    <property type="evidence" value="ECO:0007669"/>
    <property type="project" value="TreeGrafter"/>
</dbReference>
<dbReference type="GO" id="GO:0004645">
    <property type="term" value="F:1,4-alpha-oligoglucan phosphorylase activity"/>
    <property type="evidence" value="ECO:0007669"/>
    <property type="project" value="InterPro"/>
</dbReference>
<dbReference type="GO" id="GO:0009032">
    <property type="term" value="F:thymidine phosphorylase activity"/>
    <property type="evidence" value="ECO:0007669"/>
    <property type="project" value="UniProtKB-UniRule"/>
</dbReference>
<dbReference type="GO" id="GO:0006206">
    <property type="term" value="P:pyrimidine nucleobase metabolic process"/>
    <property type="evidence" value="ECO:0007669"/>
    <property type="project" value="InterPro"/>
</dbReference>
<dbReference type="GO" id="GO:0006213">
    <property type="term" value="P:pyrimidine nucleoside metabolic process"/>
    <property type="evidence" value="ECO:0007669"/>
    <property type="project" value="InterPro"/>
</dbReference>
<dbReference type="Gene3D" id="1.20.970.50">
    <property type="match status" value="1"/>
</dbReference>
<dbReference type="Gene3D" id="3.40.1030.10">
    <property type="entry name" value="Nucleoside phosphorylase/phosphoribosyltransferase catalytic domain"/>
    <property type="match status" value="1"/>
</dbReference>
<dbReference type="Gene3D" id="3.90.1170.30">
    <property type="entry name" value="Pyrimidine nucleoside phosphorylase-like, C-terminal domain"/>
    <property type="match status" value="1"/>
</dbReference>
<dbReference type="HAMAP" id="MF_00703">
    <property type="entry name" value="Thymid_phosp_2"/>
    <property type="match status" value="1"/>
</dbReference>
<dbReference type="InterPro" id="IPR000312">
    <property type="entry name" value="Glycosyl_Trfase_fam3"/>
</dbReference>
<dbReference type="InterPro" id="IPR017459">
    <property type="entry name" value="Glycosyl_Trfase_fam3_N_dom"/>
</dbReference>
<dbReference type="InterPro" id="IPR036320">
    <property type="entry name" value="Glycosyl_Trfase_fam3_N_dom_sf"/>
</dbReference>
<dbReference type="InterPro" id="IPR035902">
    <property type="entry name" value="Nuc_phospho_transferase"/>
</dbReference>
<dbReference type="InterPro" id="IPR036566">
    <property type="entry name" value="PYNP-like_C_sf"/>
</dbReference>
<dbReference type="InterPro" id="IPR013102">
    <property type="entry name" value="PYNP_C"/>
</dbReference>
<dbReference type="InterPro" id="IPR017872">
    <property type="entry name" value="Pyrmidine_PPase_CS"/>
</dbReference>
<dbReference type="InterPro" id="IPR028579">
    <property type="entry name" value="Thym_Pase_Put"/>
</dbReference>
<dbReference type="InterPro" id="IPR013466">
    <property type="entry name" value="Thymidine/AMP_Pase"/>
</dbReference>
<dbReference type="InterPro" id="IPR000053">
    <property type="entry name" value="Thymidine/pyrmidine_PPase"/>
</dbReference>
<dbReference type="NCBIfam" id="TIGR02645">
    <property type="entry name" value="ARCH_P_rylase"/>
    <property type="match status" value="1"/>
</dbReference>
<dbReference type="NCBIfam" id="NF003338">
    <property type="entry name" value="PRK04350.1"/>
    <property type="match status" value="1"/>
</dbReference>
<dbReference type="PANTHER" id="PTHR10515">
    <property type="entry name" value="THYMIDINE PHOSPHORYLASE"/>
    <property type="match status" value="1"/>
</dbReference>
<dbReference type="PANTHER" id="PTHR10515:SF0">
    <property type="entry name" value="THYMIDINE PHOSPHORYLASE"/>
    <property type="match status" value="1"/>
</dbReference>
<dbReference type="Pfam" id="PF02885">
    <property type="entry name" value="Glycos_trans_3N"/>
    <property type="match status" value="1"/>
</dbReference>
<dbReference type="Pfam" id="PF00591">
    <property type="entry name" value="Glycos_transf_3"/>
    <property type="match status" value="1"/>
</dbReference>
<dbReference type="Pfam" id="PF07831">
    <property type="entry name" value="PYNP_C"/>
    <property type="match status" value="1"/>
</dbReference>
<dbReference type="SMART" id="SM00941">
    <property type="entry name" value="PYNP_C"/>
    <property type="match status" value="1"/>
</dbReference>
<dbReference type="SUPFAM" id="SSF52418">
    <property type="entry name" value="Nucleoside phosphorylase/phosphoribosyltransferase catalytic domain"/>
    <property type="match status" value="1"/>
</dbReference>
<dbReference type="SUPFAM" id="SSF47648">
    <property type="entry name" value="Nucleoside phosphorylase/phosphoribosyltransferase N-terminal domain"/>
    <property type="match status" value="1"/>
</dbReference>
<dbReference type="SUPFAM" id="SSF54680">
    <property type="entry name" value="Pyrimidine nucleoside phosphorylase C-terminal domain"/>
    <property type="match status" value="1"/>
</dbReference>
<dbReference type="PROSITE" id="PS00647">
    <property type="entry name" value="THYMID_PHOSPHORYLASE"/>
    <property type="match status" value="1"/>
</dbReference>
<organism>
    <name type="scientific">Rhodopseudomonas palustris (strain ATCC BAA-98 / CGA009)</name>
    <dbReference type="NCBI Taxonomy" id="258594"/>
    <lineage>
        <taxon>Bacteria</taxon>
        <taxon>Pseudomonadati</taxon>
        <taxon>Pseudomonadota</taxon>
        <taxon>Alphaproteobacteria</taxon>
        <taxon>Hyphomicrobiales</taxon>
        <taxon>Nitrobacteraceae</taxon>
        <taxon>Rhodopseudomonas</taxon>
    </lineage>
</organism>
<keyword id="KW-0328">Glycosyltransferase</keyword>
<keyword id="KW-0808">Transferase</keyword>
<reference key="1">
    <citation type="journal article" date="2004" name="Nat. Biotechnol.">
        <title>Complete genome sequence of the metabolically versatile photosynthetic bacterium Rhodopseudomonas palustris.</title>
        <authorList>
            <person name="Larimer F.W."/>
            <person name="Chain P."/>
            <person name="Hauser L."/>
            <person name="Lamerdin J.E."/>
            <person name="Malfatti S."/>
            <person name="Do L."/>
            <person name="Land M.L."/>
            <person name="Pelletier D.A."/>
            <person name="Beatty J.T."/>
            <person name="Lang A.S."/>
            <person name="Tabita F.R."/>
            <person name="Gibson J.L."/>
            <person name="Hanson T.E."/>
            <person name="Bobst C."/>
            <person name="Torres y Torres J.L."/>
            <person name="Peres C."/>
            <person name="Harrison F.H."/>
            <person name="Gibson J."/>
            <person name="Harwood C.S."/>
        </authorList>
    </citation>
    <scope>NUCLEOTIDE SEQUENCE [LARGE SCALE GENOMIC DNA]</scope>
    <source>
        <strain>ATCC BAA-98 / CGA009</strain>
    </source>
</reference>
<proteinExistence type="inferred from homology"/>
<sequence>MNAPDLTRPPLTIRRISLDTGRENVAVISRRSRALRPEVFRGFSRVELRINSKVLLATLMITDDDAMIGPDEVGLSEPAFRRFNEPVGSAVSVTPARSPASLDAVRAKIQGHTLSAAEITAIVDDLAHFRYSDMEIAAFLISAARFTTTDELLALVGAMASVGTKLTWDTPIVVDKHCIGGIPGNRTTMIVVPIVAAHGLMIPKTSSRAITSPAGTADTMELLARVDLDVEQMKQVVHACGGCLVWGGHVNLSPADDILISVERPLSLDTPEQMVASIMSKKLAAGSTRLLIDFPVGPSAKVTNANEAMRLRKLFEFVGDHFGISVEVVTTDGRQPIGRGIGPVLEARDVMAVLGNEPGAPADLREKSLRLAAHLLEYDPKLRGGTGYARAKELLDSGAALKKMQQIIDAQGPSPCPAELGSYAADVLAAADGVVNGIDCLRINRLARSAGAPVAKGAGIDLFKKIGDRVEKGEPLYRVYASDRSEFDLALAAAQAESGFAINHHTPADVDLVS</sequence>
<name>TYPH_RHOPA</name>
<protein>
    <recommendedName>
        <fullName evidence="1">Putative thymidine phosphorylase</fullName>
        <ecNumber evidence="1">2.4.2.4</ecNumber>
    </recommendedName>
    <alternativeName>
        <fullName evidence="1">TdRPase</fullName>
    </alternativeName>
</protein>
<accession>Q6N2A3</accession>
<feature type="chain" id="PRO_0000314713" description="Putative thymidine phosphorylase">
    <location>
        <begin position="1"/>
        <end position="514"/>
    </location>
</feature>
<comment type="catalytic activity">
    <reaction evidence="1">
        <text>thymidine + phosphate = 2-deoxy-alpha-D-ribose 1-phosphate + thymine</text>
        <dbReference type="Rhea" id="RHEA:16037"/>
        <dbReference type="ChEBI" id="CHEBI:17748"/>
        <dbReference type="ChEBI" id="CHEBI:17821"/>
        <dbReference type="ChEBI" id="CHEBI:43474"/>
        <dbReference type="ChEBI" id="CHEBI:57259"/>
        <dbReference type="EC" id="2.4.2.4"/>
    </reaction>
</comment>
<comment type="similarity">
    <text evidence="1">Belongs to the thymidine/pyrimidine-nucleoside phosphorylase family. Type 2 subfamily.</text>
</comment>
<comment type="sequence caution" evidence="2">
    <conflict type="erroneous initiation">
        <sequence resource="EMBL-CDS" id="CAE29588"/>
    </conflict>
</comment>